<accession>O84686</accession>
<reference key="1">
    <citation type="journal article" date="1998" name="Science">
        <title>Genome sequence of an obligate intracellular pathogen of humans: Chlamydia trachomatis.</title>
        <authorList>
            <person name="Stephens R.S."/>
            <person name="Kalman S."/>
            <person name="Lammel C.J."/>
            <person name="Fan J."/>
            <person name="Marathe R."/>
            <person name="Aravind L."/>
            <person name="Mitchell W.P."/>
            <person name="Olinger L."/>
            <person name="Tatusov R.L."/>
            <person name="Zhao Q."/>
            <person name="Koonin E.V."/>
            <person name="Davis R.W."/>
        </authorList>
    </citation>
    <scope>NUCLEOTIDE SEQUENCE [LARGE SCALE GENOMIC DNA]</scope>
    <source>
        <strain>ATCC VR-885 / DSM 19411 / UW-3/Cx</strain>
    </source>
</reference>
<feature type="chain" id="PRO_0000161105" description="Elongation factor Ts">
    <location>
        <begin position="1"/>
        <end position="282"/>
    </location>
</feature>
<feature type="region of interest" description="Involved in Mg(2+) ion dislocation from EF-Tu" evidence="1">
    <location>
        <begin position="80"/>
        <end position="83"/>
    </location>
</feature>
<comment type="function">
    <text evidence="1">Associates with the EF-Tu.GDP complex and induces the exchange of GDP to GTP. It remains bound to the aminoacyl-tRNA.EF-Tu.GTP complex up to the GTP hydrolysis stage on the ribosome (By similarity).</text>
</comment>
<comment type="subcellular location">
    <subcellularLocation>
        <location evidence="1">Cytoplasm</location>
    </subcellularLocation>
</comment>
<comment type="similarity">
    <text evidence="2">Belongs to the EF-Ts family.</text>
</comment>
<name>EFTS_CHLTR</name>
<keyword id="KW-0963">Cytoplasm</keyword>
<keyword id="KW-0251">Elongation factor</keyword>
<keyword id="KW-0648">Protein biosynthesis</keyword>
<keyword id="KW-1185">Reference proteome</keyword>
<organism>
    <name type="scientific">Chlamydia trachomatis serovar D (strain ATCC VR-885 / DSM 19411 / UW-3/Cx)</name>
    <dbReference type="NCBI Taxonomy" id="272561"/>
    <lineage>
        <taxon>Bacteria</taxon>
        <taxon>Pseudomonadati</taxon>
        <taxon>Chlamydiota</taxon>
        <taxon>Chlamydiia</taxon>
        <taxon>Chlamydiales</taxon>
        <taxon>Chlamydiaceae</taxon>
        <taxon>Chlamydia/Chlamydophila group</taxon>
        <taxon>Chlamydia</taxon>
    </lineage>
</organism>
<dbReference type="EMBL" id="AE001273">
    <property type="protein sequence ID" value="AAC68274.1"/>
    <property type="molecule type" value="Genomic_DNA"/>
</dbReference>
<dbReference type="PIR" id="F71484">
    <property type="entry name" value="F71484"/>
</dbReference>
<dbReference type="RefSeq" id="NP_220198.1">
    <property type="nucleotide sequence ID" value="NC_000117.1"/>
</dbReference>
<dbReference type="RefSeq" id="WP_010725299.1">
    <property type="nucleotide sequence ID" value="NC_000117.1"/>
</dbReference>
<dbReference type="SMR" id="O84686"/>
<dbReference type="FunCoup" id="O84686">
    <property type="interactions" value="283"/>
</dbReference>
<dbReference type="STRING" id="272561.CT_679"/>
<dbReference type="EnsemblBacteria" id="AAC68274">
    <property type="protein sequence ID" value="AAC68274"/>
    <property type="gene ID" value="CT_679"/>
</dbReference>
<dbReference type="GeneID" id="884475"/>
<dbReference type="KEGG" id="ctr:CT_679"/>
<dbReference type="PATRIC" id="fig|272561.5.peg.746"/>
<dbReference type="HOGENOM" id="CLU_047155_0_0_0"/>
<dbReference type="InParanoid" id="O84686"/>
<dbReference type="OrthoDB" id="9808348at2"/>
<dbReference type="Proteomes" id="UP000000431">
    <property type="component" value="Chromosome"/>
</dbReference>
<dbReference type="GO" id="GO:0005737">
    <property type="term" value="C:cytoplasm"/>
    <property type="evidence" value="ECO:0007669"/>
    <property type="project" value="UniProtKB-SubCell"/>
</dbReference>
<dbReference type="GO" id="GO:0003746">
    <property type="term" value="F:translation elongation factor activity"/>
    <property type="evidence" value="ECO:0000318"/>
    <property type="project" value="GO_Central"/>
</dbReference>
<dbReference type="GO" id="GO:0006414">
    <property type="term" value="P:translational elongation"/>
    <property type="evidence" value="ECO:0000318"/>
    <property type="project" value="GO_Central"/>
</dbReference>
<dbReference type="CDD" id="cd14275">
    <property type="entry name" value="UBA_EF-Ts"/>
    <property type="match status" value="1"/>
</dbReference>
<dbReference type="FunFam" id="1.10.286.20:FF:000001">
    <property type="entry name" value="Elongation factor Ts"/>
    <property type="match status" value="1"/>
</dbReference>
<dbReference type="FunFam" id="1.10.8.10:FF:000130">
    <property type="entry name" value="Elongation factor Ts"/>
    <property type="match status" value="1"/>
</dbReference>
<dbReference type="Gene3D" id="1.10.286.20">
    <property type="match status" value="1"/>
</dbReference>
<dbReference type="Gene3D" id="1.10.8.10">
    <property type="entry name" value="DNA helicase RuvA subunit, C-terminal domain"/>
    <property type="match status" value="1"/>
</dbReference>
<dbReference type="Gene3D" id="3.30.479.20">
    <property type="entry name" value="Elongation factor Ts, dimerisation domain"/>
    <property type="match status" value="2"/>
</dbReference>
<dbReference type="HAMAP" id="MF_00050">
    <property type="entry name" value="EF_Ts"/>
    <property type="match status" value="1"/>
</dbReference>
<dbReference type="InterPro" id="IPR036402">
    <property type="entry name" value="EF-Ts_dimer_sf"/>
</dbReference>
<dbReference type="InterPro" id="IPR001816">
    <property type="entry name" value="Transl_elong_EFTs/EF1B"/>
</dbReference>
<dbReference type="InterPro" id="IPR014039">
    <property type="entry name" value="Transl_elong_EFTs/EF1B_dimer"/>
</dbReference>
<dbReference type="InterPro" id="IPR018101">
    <property type="entry name" value="Transl_elong_Ts_CS"/>
</dbReference>
<dbReference type="InterPro" id="IPR009060">
    <property type="entry name" value="UBA-like_sf"/>
</dbReference>
<dbReference type="NCBIfam" id="TIGR00116">
    <property type="entry name" value="tsf"/>
    <property type="match status" value="1"/>
</dbReference>
<dbReference type="PANTHER" id="PTHR11741">
    <property type="entry name" value="ELONGATION FACTOR TS"/>
    <property type="match status" value="1"/>
</dbReference>
<dbReference type="PANTHER" id="PTHR11741:SF0">
    <property type="entry name" value="ELONGATION FACTOR TS, MITOCHONDRIAL"/>
    <property type="match status" value="1"/>
</dbReference>
<dbReference type="Pfam" id="PF00889">
    <property type="entry name" value="EF_TS"/>
    <property type="match status" value="1"/>
</dbReference>
<dbReference type="SUPFAM" id="SSF54713">
    <property type="entry name" value="Elongation factor Ts (EF-Ts), dimerisation domain"/>
    <property type="match status" value="1"/>
</dbReference>
<dbReference type="SUPFAM" id="SSF46934">
    <property type="entry name" value="UBA-like"/>
    <property type="match status" value="1"/>
</dbReference>
<dbReference type="PROSITE" id="PS01126">
    <property type="entry name" value="EF_TS_1"/>
    <property type="match status" value="1"/>
</dbReference>
<dbReference type="PROSITE" id="PS01127">
    <property type="entry name" value="EF_TS_2"/>
    <property type="match status" value="1"/>
</dbReference>
<proteinExistence type="inferred from homology"/>
<evidence type="ECO:0000250" key="1"/>
<evidence type="ECO:0000305" key="2"/>
<protein>
    <recommendedName>
        <fullName>Elongation factor Ts</fullName>
        <shortName>EF-Ts</shortName>
    </recommendedName>
</protein>
<gene>
    <name type="primary">tsf</name>
    <name type="ordered locus">CT_679</name>
</gene>
<sequence length="282" mass="30882">MSDFSMETLKNLRQQTGVGLTKCKEALEHAKGNLEDAVVYLRKLGLASAGKKEHRETKEGVIAARVDERGAALVEVNVETDFVANNNVFRAFVTSLLSDLLDHELSDVDALALVMSSQEPSLSVEELKAVTMQTVGENIRISRAFYTPVNSGQSVGIYSHGNGKAVAIAFLSGSENQEALAKDIAMHIVASQPQFLSKESVPQEVLEREREVFSSQVAGKPQEVVEKITQGKFRAFFQEACLLEQAFIKDPEVTIQGLIDRAAKASGEPLKVEHFVFWKMGA</sequence>